<dbReference type="EC" id="2.1.1.174" evidence="1"/>
<dbReference type="EMBL" id="CP000038">
    <property type="protein sequence ID" value="AAZ89706.1"/>
    <property type="molecule type" value="Genomic_DNA"/>
</dbReference>
<dbReference type="RefSeq" id="WP_000018685.1">
    <property type="nucleotide sequence ID" value="NC_007384.1"/>
</dbReference>
<dbReference type="SMR" id="Q3YXQ6"/>
<dbReference type="GeneID" id="93778903"/>
<dbReference type="KEGG" id="ssn:SSON_3121"/>
<dbReference type="HOGENOM" id="CLU_040288_4_0_6"/>
<dbReference type="Proteomes" id="UP000002529">
    <property type="component" value="Chromosome"/>
</dbReference>
<dbReference type="GO" id="GO:0005737">
    <property type="term" value="C:cytoplasm"/>
    <property type="evidence" value="ECO:0007669"/>
    <property type="project" value="UniProtKB-SubCell"/>
</dbReference>
<dbReference type="GO" id="GO:0052916">
    <property type="term" value="F:23S rRNA (guanine(1835)-N(2))-methyltransferase activity"/>
    <property type="evidence" value="ECO:0007669"/>
    <property type="project" value="UniProtKB-EC"/>
</dbReference>
<dbReference type="GO" id="GO:0003676">
    <property type="term" value="F:nucleic acid binding"/>
    <property type="evidence" value="ECO:0007669"/>
    <property type="project" value="InterPro"/>
</dbReference>
<dbReference type="CDD" id="cd02440">
    <property type="entry name" value="AdoMet_MTases"/>
    <property type="match status" value="1"/>
</dbReference>
<dbReference type="FunFam" id="3.40.50.150:FF:000046">
    <property type="entry name" value="Ribosomal RNA large subunit methyltransferase G"/>
    <property type="match status" value="1"/>
</dbReference>
<dbReference type="FunFam" id="3.40.50.150:FF:000047">
    <property type="entry name" value="Ribosomal RNA large subunit methyltransferase G"/>
    <property type="match status" value="1"/>
</dbReference>
<dbReference type="Gene3D" id="3.40.50.150">
    <property type="entry name" value="Vaccinia Virus protein VP39"/>
    <property type="match status" value="2"/>
</dbReference>
<dbReference type="HAMAP" id="MF_01859">
    <property type="entry name" value="23SrRNA_methyltr_G"/>
    <property type="match status" value="1"/>
</dbReference>
<dbReference type="InterPro" id="IPR002052">
    <property type="entry name" value="DNA_methylase_N6_adenine_CS"/>
</dbReference>
<dbReference type="InterPro" id="IPR017237">
    <property type="entry name" value="rRNA_m2G-MeTrfase_RlmG"/>
</dbReference>
<dbReference type="InterPro" id="IPR046977">
    <property type="entry name" value="RsmC/RlmG"/>
</dbReference>
<dbReference type="InterPro" id="IPR029063">
    <property type="entry name" value="SAM-dependent_MTases_sf"/>
</dbReference>
<dbReference type="InterPro" id="IPR007848">
    <property type="entry name" value="Small_mtfrase_dom"/>
</dbReference>
<dbReference type="NCBIfam" id="NF011577">
    <property type="entry name" value="PRK15001.1"/>
    <property type="match status" value="1"/>
</dbReference>
<dbReference type="PANTHER" id="PTHR47816:SF5">
    <property type="entry name" value="RIBOSOMAL RNA LARGE SUBUNIT METHYLTRANSFERASE G"/>
    <property type="match status" value="1"/>
</dbReference>
<dbReference type="PANTHER" id="PTHR47816">
    <property type="entry name" value="RIBOSOMAL RNA SMALL SUBUNIT METHYLTRANSFERASE C"/>
    <property type="match status" value="1"/>
</dbReference>
<dbReference type="Pfam" id="PF05175">
    <property type="entry name" value="MTS"/>
    <property type="match status" value="1"/>
</dbReference>
<dbReference type="PIRSF" id="PIRSF037565">
    <property type="entry name" value="RRNA_m2G_Mtase_RsmD_prd"/>
    <property type="match status" value="1"/>
</dbReference>
<dbReference type="SUPFAM" id="SSF53335">
    <property type="entry name" value="S-adenosyl-L-methionine-dependent methyltransferases"/>
    <property type="match status" value="1"/>
</dbReference>
<protein>
    <recommendedName>
        <fullName evidence="1">Ribosomal RNA large subunit methyltransferase G</fullName>
        <ecNumber evidence="1">2.1.1.174</ecNumber>
    </recommendedName>
    <alternativeName>
        <fullName evidence="1">23S rRNA m2G1835 methyltransferase</fullName>
    </alternativeName>
    <alternativeName>
        <fullName evidence="1">rRNA (guanine-N(2)-)-methyltransferase RlmG</fullName>
    </alternativeName>
</protein>
<name>RLMG_SHISS</name>
<organism>
    <name type="scientific">Shigella sonnei (strain Ss046)</name>
    <dbReference type="NCBI Taxonomy" id="300269"/>
    <lineage>
        <taxon>Bacteria</taxon>
        <taxon>Pseudomonadati</taxon>
        <taxon>Pseudomonadota</taxon>
        <taxon>Gammaproteobacteria</taxon>
        <taxon>Enterobacterales</taxon>
        <taxon>Enterobacteriaceae</taxon>
        <taxon>Shigella</taxon>
    </lineage>
</organism>
<accession>Q3YXQ6</accession>
<reference key="1">
    <citation type="journal article" date="2005" name="Nucleic Acids Res.">
        <title>Genome dynamics and diversity of Shigella species, the etiologic agents of bacillary dysentery.</title>
        <authorList>
            <person name="Yang F."/>
            <person name="Yang J."/>
            <person name="Zhang X."/>
            <person name="Chen L."/>
            <person name="Jiang Y."/>
            <person name="Yan Y."/>
            <person name="Tang X."/>
            <person name="Wang J."/>
            <person name="Xiong Z."/>
            <person name="Dong J."/>
            <person name="Xue Y."/>
            <person name="Zhu Y."/>
            <person name="Xu X."/>
            <person name="Sun L."/>
            <person name="Chen S."/>
            <person name="Nie H."/>
            <person name="Peng J."/>
            <person name="Xu J."/>
            <person name="Wang Y."/>
            <person name="Yuan Z."/>
            <person name="Wen Y."/>
            <person name="Yao Z."/>
            <person name="Shen Y."/>
            <person name="Qiang B."/>
            <person name="Hou Y."/>
            <person name="Yu J."/>
            <person name="Jin Q."/>
        </authorList>
    </citation>
    <scope>NUCLEOTIDE SEQUENCE [LARGE SCALE GENOMIC DNA]</scope>
    <source>
        <strain>Ss046</strain>
    </source>
</reference>
<feature type="chain" id="PRO_0000366526" description="Ribosomal RNA large subunit methyltransferase G">
    <location>
        <begin position="1"/>
        <end position="378"/>
    </location>
</feature>
<evidence type="ECO:0000255" key="1">
    <source>
        <dbReference type="HAMAP-Rule" id="MF_01859"/>
    </source>
</evidence>
<comment type="function">
    <text evidence="1">Specifically methylates the guanine in position 1835 (m2G1835) of 23S rRNA.</text>
</comment>
<comment type="catalytic activity">
    <reaction evidence="1">
        <text>guanosine(1835) in 23S rRNA + S-adenosyl-L-methionine = N(2)-methylguanosine(1835) in 23S rRNA + S-adenosyl-L-homocysteine + H(+)</text>
        <dbReference type="Rhea" id="RHEA:42744"/>
        <dbReference type="Rhea" id="RHEA-COMP:10217"/>
        <dbReference type="Rhea" id="RHEA-COMP:10218"/>
        <dbReference type="ChEBI" id="CHEBI:15378"/>
        <dbReference type="ChEBI" id="CHEBI:57856"/>
        <dbReference type="ChEBI" id="CHEBI:59789"/>
        <dbReference type="ChEBI" id="CHEBI:74269"/>
        <dbReference type="ChEBI" id="CHEBI:74481"/>
        <dbReference type="EC" id="2.1.1.174"/>
    </reaction>
</comment>
<comment type="subcellular location">
    <subcellularLocation>
        <location evidence="1">Cytoplasm</location>
    </subcellularLocation>
</comment>
<comment type="similarity">
    <text evidence="1">Belongs to the methyltransferase superfamily. RlmG family.</text>
</comment>
<gene>
    <name evidence="1" type="primary">rlmG</name>
    <name type="ordered locus">SSON_3121</name>
</gene>
<keyword id="KW-0963">Cytoplasm</keyword>
<keyword id="KW-0489">Methyltransferase</keyword>
<keyword id="KW-1185">Reference proteome</keyword>
<keyword id="KW-0698">rRNA processing</keyword>
<keyword id="KW-0949">S-adenosyl-L-methionine</keyword>
<keyword id="KW-0808">Transferase</keyword>
<proteinExistence type="inferred from homology"/>
<sequence length="378" mass="42284">MSHLDNGFRSLTLQRFPATDDVNPLQAWEAADEYLLQQLDDTEIRGPVLILNDAFGALSCALAEHKPYSIGDSYISELATRENLRLNGIDESSVKFLDSTADYPQQPGVVLIKVPKTLALLEQQLRALRKVVTSDTRIIAGAKARDIHTSTLELFEKVLGPTTTTLAWKKARLINCTFNEPPLADAPQTVSWKLEGTDWTIHNHANVFSRTGLDIGARFFMQHLPENLEGEIVDLGCGNGVIGLTLLDKNPQAKVVFVDESPMAVASSRLNVETNMPEALDRSEFMINNALSGVEPFRFNAVLCNPPFHQQHALTDNVAWEMFHHARRCLKINGELYIVANRHLDYFHKLKKIFGNCTTIATNNKFVVLKAVKLGRRR</sequence>